<gene>
    <name type="primary">commd3</name>
    <name type="ORF">DDB_G0283795</name>
</gene>
<name>COMD3_DICDI</name>
<accession>Q54QK4</accession>
<comment type="function">
    <text evidence="1">Scaffold protein in the commander complex that is essential for endosomal recycling of transmembrane cargos; the commander complex is composed of the CCC subcomplex and the retriever subcomplex.</text>
</comment>
<comment type="subunit">
    <text evidence="1">Component of the commander complex consisting of the CCC subcomplex and the retriever subcomplex (By similarity). Component of the CCC subcomplex (By similarity).</text>
</comment>
<comment type="similarity">
    <text evidence="3">Belongs to the COMM domain-containing protein 3 family.</text>
</comment>
<proteinExistence type="inferred from homology"/>
<sequence length="195" mass="22554">MNLSEDVLKGIETLSDEKLINDSVFKHIIDTCFLVILKKKTESDLFDNKAVSSVDTIALKQTFSAFIVFILESMKINYDQSSISDLLEEHKLSSSRIDFISNYFKEYRVAIRKHLSVTNFHFPHIIDVNWRLDLFMKSNAVEKLNTPVYLINLTTEQEENVKGKVQFAATLDQLQDLVFKLRDAQKQIERSSIKS</sequence>
<reference key="1">
    <citation type="journal article" date="2005" name="Nature">
        <title>The genome of the social amoeba Dictyostelium discoideum.</title>
        <authorList>
            <person name="Eichinger L."/>
            <person name="Pachebat J.A."/>
            <person name="Gloeckner G."/>
            <person name="Rajandream M.A."/>
            <person name="Sucgang R."/>
            <person name="Berriman M."/>
            <person name="Song J."/>
            <person name="Olsen R."/>
            <person name="Szafranski K."/>
            <person name="Xu Q."/>
            <person name="Tunggal B."/>
            <person name="Kummerfeld S."/>
            <person name="Madera M."/>
            <person name="Konfortov B.A."/>
            <person name="Rivero F."/>
            <person name="Bankier A.T."/>
            <person name="Lehmann R."/>
            <person name="Hamlin N."/>
            <person name="Davies R."/>
            <person name="Gaudet P."/>
            <person name="Fey P."/>
            <person name="Pilcher K."/>
            <person name="Chen G."/>
            <person name="Saunders D."/>
            <person name="Sodergren E.J."/>
            <person name="Davis P."/>
            <person name="Kerhornou A."/>
            <person name="Nie X."/>
            <person name="Hall N."/>
            <person name="Anjard C."/>
            <person name="Hemphill L."/>
            <person name="Bason N."/>
            <person name="Farbrother P."/>
            <person name="Desany B."/>
            <person name="Just E."/>
            <person name="Morio T."/>
            <person name="Rost R."/>
            <person name="Churcher C.M."/>
            <person name="Cooper J."/>
            <person name="Haydock S."/>
            <person name="van Driessche N."/>
            <person name="Cronin A."/>
            <person name="Goodhead I."/>
            <person name="Muzny D.M."/>
            <person name="Mourier T."/>
            <person name="Pain A."/>
            <person name="Lu M."/>
            <person name="Harper D."/>
            <person name="Lindsay R."/>
            <person name="Hauser H."/>
            <person name="James K.D."/>
            <person name="Quiles M."/>
            <person name="Madan Babu M."/>
            <person name="Saito T."/>
            <person name="Buchrieser C."/>
            <person name="Wardroper A."/>
            <person name="Felder M."/>
            <person name="Thangavelu M."/>
            <person name="Johnson D."/>
            <person name="Knights A."/>
            <person name="Loulseged H."/>
            <person name="Mungall K.L."/>
            <person name="Oliver K."/>
            <person name="Price C."/>
            <person name="Quail M.A."/>
            <person name="Urushihara H."/>
            <person name="Hernandez J."/>
            <person name="Rabbinowitsch E."/>
            <person name="Steffen D."/>
            <person name="Sanders M."/>
            <person name="Ma J."/>
            <person name="Kohara Y."/>
            <person name="Sharp S."/>
            <person name="Simmonds M.N."/>
            <person name="Spiegler S."/>
            <person name="Tivey A."/>
            <person name="Sugano S."/>
            <person name="White B."/>
            <person name="Walker D."/>
            <person name="Woodward J.R."/>
            <person name="Winckler T."/>
            <person name="Tanaka Y."/>
            <person name="Shaulsky G."/>
            <person name="Schleicher M."/>
            <person name="Weinstock G.M."/>
            <person name="Rosenthal A."/>
            <person name="Cox E.C."/>
            <person name="Chisholm R.L."/>
            <person name="Gibbs R.A."/>
            <person name="Loomis W.F."/>
            <person name="Platzer M."/>
            <person name="Kay R.R."/>
            <person name="Williams J.G."/>
            <person name="Dear P.H."/>
            <person name="Noegel A.A."/>
            <person name="Barrell B.G."/>
            <person name="Kuspa A."/>
        </authorList>
    </citation>
    <scope>NUCLEOTIDE SEQUENCE [LARGE SCALE GENOMIC DNA]</scope>
    <source>
        <strain>AX4</strain>
    </source>
</reference>
<organism>
    <name type="scientific">Dictyostelium discoideum</name>
    <name type="common">Social amoeba</name>
    <dbReference type="NCBI Taxonomy" id="44689"/>
    <lineage>
        <taxon>Eukaryota</taxon>
        <taxon>Amoebozoa</taxon>
        <taxon>Evosea</taxon>
        <taxon>Eumycetozoa</taxon>
        <taxon>Dictyostelia</taxon>
        <taxon>Dictyosteliales</taxon>
        <taxon>Dictyosteliaceae</taxon>
        <taxon>Dictyostelium</taxon>
    </lineage>
</organism>
<evidence type="ECO:0000250" key="1">
    <source>
        <dbReference type="UniProtKB" id="Q9UBI1"/>
    </source>
</evidence>
<evidence type="ECO:0000255" key="2">
    <source>
        <dbReference type="PROSITE-ProRule" id="PRU00602"/>
    </source>
</evidence>
<evidence type="ECO:0000305" key="3"/>
<protein>
    <recommendedName>
        <fullName>COMM domain-containing protein 3</fullName>
    </recommendedName>
</protein>
<dbReference type="EMBL" id="AAFI02000057">
    <property type="protein sequence ID" value="EAL65512.1"/>
    <property type="molecule type" value="Genomic_DNA"/>
</dbReference>
<dbReference type="RefSeq" id="XP_638867.1">
    <property type="nucleotide sequence ID" value="XM_633775.1"/>
</dbReference>
<dbReference type="SMR" id="Q54QK4"/>
<dbReference type="FunCoup" id="Q54QK4">
    <property type="interactions" value="1"/>
</dbReference>
<dbReference type="STRING" id="44689.Q54QK4"/>
<dbReference type="PaxDb" id="44689-DDB0234048"/>
<dbReference type="EnsemblProtists" id="EAL65512">
    <property type="protein sequence ID" value="EAL65512"/>
    <property type="gene ID" value="DDB_G0283795"/>
</dbReference>
<dbReference type="GeneID" id="8624265"/>
<dbReference type="KEGG" id="ddi:DDB_G0283795"/>
<dbReference type="dictyBase" id="DDB_G0283795">
    <property type="gene designation" value="commd3"/>
</dbReference>
<dbReference type="VEuPathDB" id="AmoebaDB:DDB_G0283795"/>
<dbReference type="eggNOG" id="ENOG502R79J">
    <property type="taxonomic scope" value="Eukaryota"/>
</dbReference>
<dbReference type="HOGENOM" id="CLU_118734_0_0_1"/>
<dbReference type="InParanoid" id="Q54QK4"/>
<dbReference type="OMA" id="DWRLDYC"/>
<dbReference type="PhylomeDB" id="Q54QK4"/>
<dbReference type="Reactome" id="R-DDI-6798695">
    <property type="pathway name" value="Neutrophil degranulation"/>
</dbReference>
<dbReference type="Reactome" id="R-DDI-8951664">
    <property type="pathway name" value="Neddylation"/>
</dbReference>
<dbReference type="PRO" id="PR:Q54QK4"/>
<dbReference type="Proteomes" id="UP000002195">
    <property type="component" value="Chromosome 4"/>
</dbReference>
<dbReference type="GO" id="GO:0006814">
    <property type="term" value="P:sodium ion transport"/>
    <property type="evidence" value="ECO:0007669"/>
    <property type="project" value="InterPro"/>
</dbReference>
<dbReference type="CDD" id="cd04751">
    <property type="entry name" value="Commd3"/>
    <property type="match status" value="1"/>
</dbReference>
<dbReference type="InterPro" id="IPR017920">
    <property type="entry name" value="COMM"/>
</dbReference>
<dbReference type="InterPro" id="IPR037355">
    <property type="entry name" value="COMMD3"/>
</dbReference>
<dbReference type="PANTHER" id="PTHR31159">
    <property type="entry name" value="COMM DOMAIN-CONTAINING PROTEIN 3"/>
    <property type="match status" value="1"/>
</dbReference>
<dbReference type="PANTHER" id="PTHR31159:SF1">
    <property type="entry name" value="COMM DOMAIN-CONTAINING PROTEIN 3"/>
    <property type="match status" value="1"/>
</dbReference>
<dbReference type="Pfam" id="PF07258">
    <property type="entry name" value="COMM_domain"/>
    <property type="match status" value="1"/>
</dbReference>
<dbReference type="Pfam" id="PF21672">
    <property type="entry name" value="COMM_HN"/>
    <property type="match status" value="1"/>
</dbReference>
<dbReference type="PROSITE" id="PS51269">
    <property type="entry name" value="COMM"/>
    <property type="match status" value="1"/>
</dbReference>
<feature type="chain" id="PRO_0000327463" description="COMM domain-containing protein 3">
    <location>
        <begin position="1"/>
        <end position="195"/>
    </location>
</feature>
<feature type="domain" description="COMM" evidence="2">
    <location>
        <begin position="124"/>
        <end position="192"/>
    </location>
</feature>
<keyword id="KW-1185">Reference proteome</keyword>